<organism>
    <name type="scientific">Arabidopsis thaliana</name>
    <name type="common">Mouse-ear cress</name>
    <dbReference type="NCBI Taxonomy" id="3702"/>
    <lineage>
        <taxon>Eukaryota</taxon>
        <taxon>Viridiplantae</taxon>
        <taxon>Streptophyta</taxon>
        <taxon>Embryophyta</taxon>
        <taxon>Tracheophyta</taxon>
        <taxon>Spermatophyta</taxon>
        <taxon>Magnoliopsida</taxon>
        <taxon>eudicotyledons</taxon>
        <taxon>Gunneridae</taxon>
        <taxon>Pentapetalae</taxon>
        <taxon>rosids</taxon>
        <taxon>malvids</taxon>
        <taxon>Brassicales</taxon>
        <taxon>Brassicaceae</taxon>
        <taxon>Camelineae</taxon>
        <taxon>Arabidopsis</taxon>
    </lineage>
</organism>
<name>C7101_ARATH</name>
<reference key="1">
    <citation type="journal article" date="2006" name="Plant Cell">
        <title>Cytochrome P450 CYP710A encodes the sterol C-22 desaturase in Arabidopsis and tomato.</title>
        <authorList>
            <person name="Morikawa T."/>
            <person name="Mizutani M."/>
            <person name="Aoki N."/>
            <person name="Watanabe B."/>
            <person name="Saga H."/>
            <person name="Saito S."/>
            <person name="Oikawa A."/>
            <person name="Suzuki H."/>
            <person name="Sakurai N."/>
            <person name="Shibata D."/>
            <person name="Wadano A."/>
            <person name="Sakata K."/>
            <person name="Ohta D."/>
        </authorList>
    </citation>
    <scope>NUCLEOTIDE SEQUENCE [GENOMIC DNA]</scope>
    <scope>FUNCTION</scope>
    <scope>CATALYTIC ACTIVITY</scope>
    <scope>BIOPHYSICOCHEMICAL PROPERTIES</scope>
    <scope>TISSUE SPECIFICITY</scope>
    <scope>PATHWAY</scope>
</reference>
<reference key="2">
    <citation type="journal article" date="1999" name="Nature">
        <title>Sequence and analysis of chromosome 2 of the plant Arabidopsis thaliana.</title>
        <authorList>
            <person name="Lin X."/>
            <person name="Kaul S."/>
            <person name="Rounsley S.D."/>
            <person name="Shea T.P."/>
            <person name="Benito M.-I."/>
            <person name="Town C.D."/>
            <person name="Fujii C.Y."/>
            <person name="Mason T.M."/>
            <person name="Bowman C.L."/>
            <person name="Barnstead M.E."/>
            <person name="Feldblyum T.V."/>
            <person name="Buell C.R."/>
            <person name="Ketchum K.A."/>
            <person name="Lee J.J."/>
            <person name="Ronning C.M."/>
            <person name="Koo H.L."/>
            <person name="Moffat K.S."/>
            <person name="Cronin L.A."/>
            <person name="Shen M."/>
            <person name="Pai G."/>
            <person name="Van Aken S."/>
            <person name="Umayam L."/>
            <person name="Tallon L.J."/>
            <person name="Gill J.E."/>
            <person name="Adams M.D."/>
            <person name="Carrera A.J."/>
            <person name="Creasy T.H."/>
            <person name="Goodman H.M."/>
            <person name="Somerville C.R."/>
            <person name="Copenhaver G.P."/>
            <person name="Preuss D."/>
            <person name="Nierman W.C."/>
            <person name="White O."/>
            <person name="Eisen J.A."/>
            <person name="Salzberg S.L."/>
            <person name="Fraser C.M."/>
            <person name="Venter J.C."/>
        </authorList>
    </citation>
    <scope>NUCLEOTIDE SEQUENCE [LARGE SCALE GENOMIC DNA]</scope>
    <source>
        <strain>cv. Columbia</strain>
    </source>
</reference>
<reference key="3">
    <citation type="journal article" date="2017" name="Plant J.">
        <title>Araport11: a complete reannotation of the Arabidopsis thaliana reference genome.</title>
        <authorList>
            <person name="Cheng C.Y."/>
            <person name="Krishnakumar V."/>
            <person name="Chan A.P."/>
            <person name="Thibaud-Nissen F."/>
            <person name="Schobel S."/>
            <person name="Town C.D."/>
        </authorList>
    </citation>
    <scope>GENOME REANNOTATION</scope>
    <source>
        <strain>cv. Columbia</strain>
    </source>
</reference>
<reference key="4">
    <citation type="journal article" date="2003" name="Science">
        <title>Empirical analysis of transcriptional activity in the Arabidopsis genome.</title>
        <authorList>
            <person name="Yamada K."/>
            <person name="Lim J."/>
            <person name="Dale J.M."/>
            <person name="Chen H."/>
            <person name="Shinn P."/>
            <person name="Palm C.J."/>
            <person name="Southwick A.M."/>
            <person name="Wu H.C."/>
            <person name="Kim C.J."/>
            <person name="Nguyen M."/>
            <person name="Pham P.K."/>
            <person name="Cheuk R.F."/>
            <person name="Karlin-Newmann G."/>
            <person name="Liu S.X."/>
            <person name="Lam B."/>
            <person name="Sakano H."/>
            <person name="Wu T."/>
            <person name="Yu G."/>
            <person name="Miranda M."/>
            <person name="Quach H.L."/>
            <person name="Tripp M."/>
            <person name="Chang C.H."/>
            <person name="Lee J.M."/>
            <person name="Toriumi M.J."/>
            <person name="Chan M.M."/>
            <person name="Tang C.C."/>
            <person name="Onodera C.S."/>
            <person name="Deng J.M."/>
            <person name="Akiyama K."/>
            <person name="Ansari Y."/>
            <person name="Arakawa T."/>
            <person name="Banh J."/>
            <person name="Banno F."/>
            <person name="Bowser L."/>
            <person name="Brooks S.Y."/>
            <person name="Carninci P."/>
            <person name="Chao Q."/>
            <person name="Choy N."/>
            <person name="Enju A."/>
            <person name="Goldsmith A.D."/>
            <person name="Gurjal M."/>
            <person name="Hansen N.F."/>
            <person name="Hayashizaki Y."/>
            <person name="Johnson-Hopson C."/>
            <person name="Hsuan V.W."/>
            <person name="Iida K."/>
            <person name="Karnes M."/>
            <person name="Khan S."/>
            <person name="Koesema E."/>
            <person name="Ishida J."/>
            <person name="Jiang P.X."/>
            <person name="Jones T."/>
            <person name="Kawai J."/>
            <person name="Kamiya A."/>
            <person name="Meyers C."/>
            <person name="Nakajima M."/>
            <person name="Narusaka M."/>
            <person name="Seki M."/>
            <person name="Sakurai T."/>
            <person name="Satou M."/>
            <person name="Tamse R."/>
            <person name="Vaysberg M."/>
            <person name="Wallender E.K."/>
            <person name="Wong C."/>
            <person name="Yamamura Y."/>
            <person name="Yuan S."/>
            <person name="Shinozaki K."/>
            <person name="Davis R.W."/>
            <person name="Theologis A."/>
            <person name="Ecker J.R."/>
        </authorList>
    </citation>
    <scope>NUCLEOTIDE SEQUENCE [LARGE SCALE MRNA]</scope>
    <source>
        <strain>cv. Columbia</strain>
    </source>
</reference>
<reference key="5">
    <citation type="journal article" date="2008" name="Planta">
        <title>Overexpression of CYP710A1 and CYP710A4 in transgenic Arabidopsis plants increases the level of stigmasterol at the expense of sitosterol.</title>
        <authorList>
            <person name="Arnqvist L."/>
            <person name="Persson M."/>
            <person name="Jonsson L."/>
            <person name="Dutta P.C."/>
            <person name="Sitbon F."/>
        </authorList>
    </citation>
    <scope>FUNCTION</scope>
</reference>
<reference key="6">
    <citation type="journal article" date="2010" name="Plant J.">
        <title>A role for beta-sitosterol to stigmasterol conversion in plant-pathogen interactions.</title>
        <authorList>
            <person name="Griebel T."/>
            <person name="Zeier J."/>
        </authorList>
    </citation>
    <scope>FUNCTION</scope>
    <scope>INDUCTION</scope>
    <scope>DISRUPTION PHENOTYPE</scope>
</reference>
<evidence type="ECO:0000250" key="1">
    <source>
        <dbReference type="UniProtKB" id="P04798"/>
    </source>
</evidence>
<evidence type="ECO:0000255" key="2"/>
<evidence type="ECO:0000269" key="3">
    <source>
    </source>
</evidence>
<evidence type="ECO:0000269" key="4">
    <source>
    </source>
</evidence>
<evidence type="ECO:0000269" key="5">
    <source>
    </source>
</evidence>
<evidence type="ECO:0000303" key="6">
    <source>
    </source>
</evidence>
<evidence type="ECO:0000305" key="7"/>
<evidence type="ECO:0000312" key="8">
    <source>
        <dbReference type="Araport" id="AT2G34500"/>
    </source>
</evidence>
<evidence type="ECO:0000312" key="9">
    <source>
        <dbReference type="EMBL" id="AAM14944.1"/>
    </source>
</evidence>
<comment type="function">
    <text evidence="3 4 5">Required to form the C-22 double bond in the sterol side chain. Possesses in vitro C-22 desaturase activity toward beta-sitosterol and produces stigmasterol. No activity with campesterol.</text>
</comment>
<comment type="catalytic activity">
    <reaction evidence="3">
        <text>5-dehydroepisterol + NADPH + O2 + H(+) = ergosta-5,7,22,24(28)-tetraen-3beta-ol + NADP(+) + 2 H2O</text>
        <dbReference type="Rhea" id="RHEA:33467"/>
        <dbReference type="ChEBI" id="CHEBI:15377"/>
        <dbReference type="ChEBI" id="CHEBI:15378"/>
        <dbReference type="ChEBI" id="CHEBI:15379"/>
        <dbReference type="ChEBI" id="CHEBI:18249"/>
        <dbReference type="ChEBI" id="CHEBI:52972"/>
        <dbReference type="ChEBI" id="CHEBI:57783"/>
        <dbReference type="ChEBI" id="CHEBI:58349"/>
        <dbReference type="EC" id="1.14.19.41"/>
    </reaction>
</comment>
<comment type="cofactor">
    <cofactor evidence="1">
        <name>heme</name>
        <dbReference type="ChEBI" id="CHEBI:30413"/>
    </cofactor>
</comment>
<comment type="biophysicochemical properties">
    <kinetics>
        <KM evidence="3">1 uM for beta-sisterol</KM>
        <text evidence="3">kcat is 0.53 min(-1) for beta-sisterol.</text>
    </kinetics>
</comment>
<comment type="pathway">
    <text evidence="3">Steroid biosynthesis; sterol biosynthesis.</text>
</comment>
<comment type="subcellular location">
    <subcellularLocation>
        <location evidence="7">Membrane</location>
        <topology evidence="7">Single-pass membrane protein</topology>
    </subcellularLocation>
</comment>
<comment type="tissue specificity">
    <text evidence="3">Expressed in the vascular tissues of roots, shoots and leaves. Expressed in root tips and sepals. Very low expression in stems and siliques.</text>
</comment>
<comment type="induction">
    <text evidence="5">By infection with Pseudomonas syringae.</text>
</comment>
<comment type="disruption phenotype">
    <text evidence="5">No visible phenotype under normal growth condition, but upon infection with P.syringae, no accumulation of stigmasterol and increased resistance to the pathogen.</text>
</comment>
<comment type="miscellaneous">
    <text evidence="3">Plants overexpressing CYP710A1 show higher levels of stigmasterol and lower levels of beta-sitosterol than the wild-type.</text>
</comment>
<comment type="similarity">
    <text evidence="7">Belongs to the cytochrome P450 family.</text>
</comment>
<feature type="chain" id="PRO_0000411205" description="Cytochrome P450 710A1">
    <location>
        <begin position="1"/>
        <end position="495"/>
    </location>
</feature>
<feature type="transmembrane region" description="Helical" evidence="2">
    <location>
        <begin position="5"/>
        <end position="25"/>
    </location>
</feature>
<feature type="binding site" description="axial binding residue" evidence="1">
    <location>
        <position position="434"/>
    </location>
    <ligand>
        <name>heme</name>
        <dbReference type="ChEBI" id="CHEBI:30413"/>
    </ligand>
    <ligandPart>
        <name>Fe</name>
        <dbReference type="ChEBI" id="CHEBI:18248"/>
    </ligandPart>
</feature>
<sequence length="495" mass="55724">MVFSVSIFASLAPYLISAFLLFLLVEQLSYLFKKRNIPGPFFVPPIIGNAVALVRDPTSFWDKQSSTANISGLSANYLIGKFIVYIRDTELSHQIFSNVRPDAFHLIGHPFGKKLFGDHNLIYMFGEDHKSVRRQLAPNFTPKALSTYSALQQLVILRHLRQWEGSTSGGSRPVSLRQLVRELNLETSQTVFVGPYLDKEAKNRFRTDYNLFNLGSMALPIDLPGFAFGEARRAVKRLGETLGICAGKSKARMAAGEEPACLIDFWMQAIVAENPQPPHSGDEEIGGLLFDFLFAAQDASTSSLLWAVTLLDSEPEVLNRVREEVAKIWSPESNALITVDQLAEMKYTRSVAREVIRYRPPATMVPHVAAIDFPLTETYTIPKGTIVFPSVFDSSFQGFTEPDRFDPDRFSETRQEDQVFKRNFLAFGWGPHQCVGQRYALNHLVLFIAMFSSLLDFKRLRSDGCDEIVYCPTISPKDGCTVFLSRRVAKYPNFS</sequence>
<proteinExistence type="evidence at protein level"/>
<keyword id="KW-0349">Heme</keyword>
<keyword id="KW-0408">Iron</keyword>
<keyword id="KW-0444">Lipid biosynthesis</keyword>
<keyword id="KW-0443">Lipid metabolism</keyword>
<keyword id="KW-0472">Membrane</keyword>
<keyword id="KW-0479">Metal-binding</keyword>
<keyword id="KW-0503">Monooxygenase</keyword>
<keyword id="KW-0521">NADP</keyword>
<keyword id="KW-0560">Oxidoreductase</keyword>
<keyword id="KW-1185">Reference proteome</keyword>
<keyword id="KW-0752">Steroid biosynthesis</keyword>
<keyword id="KW-0753">Steroid metabolism</keyword>
<keyword id="KW-0756">Sterol biosynthesis</keyword>
<keyword id="KW-1207">Sterol metabolism</keyword>
<keyword id="KW-0812">Transmembrane</keyword>
<keyword id="KW-1133">Transmembrane helix</keyword>
<accession>O64697</accession>
<gene>
    <name evidence="6" type="primary">CYP710A1</name>
    <name evidence="8" type="ordered locus">At2g34500</name>
    <name evidence="9" type="ORF">F13P17.35</name>
</gene>
<dbReference type="EC" id="1.14.19.41" evidence="3"/>
<dbReference type="EMBL" id="AB219423">
    <property type="protein sequence ID" value="BAE71351.1"/>
    <property type="molecule type" value="Genomic_DNA"/>
</dbReference>
<dbReference type="EMBL" id="AC004077">
    <property type="protein sequence ID" value="AAC26690.1"/>
    <property type="molecule type" value="Genomic_DNA"/>
</dbReference>
<dbReference type="EMBL" id="AC004481">
    <property type="protein sequence ID" value="AAM14944.1"/>
    <property type="molecule type" value="Genomic_DNA"/>
</dbReference>
<dbReference type="EMBL" id="CP002685">
    <property type="protein sequence ID" value="AEC08982.1"/>
    <property type="molecule type" value="Genomic_DNA"/>
</dbReference>
<dbReference type="EMBL" id="BT002069">
    <property type="protein sequence ID" value="AAN72080.1"/>
    <property type="molecule type" value="mRNA"/>
</dbReference>
<dbReference type="EMBL" id="BT010554">
    <property type="protein sequence ID" value="AAQ65177.1"/>
    <property type="molecule type" value="mRNA"/>
</dbReference>
<dbReference type="PIR" id="T02337">
    <property type="entry name" value="T02337"/>
</dbReference>
<dbReference type="RefSeq" id="NP_180997.1">
    <property type="nucleotide sequence ID" value="NM_129002.3"/>
</dbReference>
<dbReference type="SMR" id="O64697"/>
<dbReference type="FunCoup" id="O64697">
    <property type="interactions" value="862"/>
</dbReference>
<dbReference type="STRING" id="3702.O64697"/>
<dbReference type="PaxDb" id="3702-AT2G34500.1"/>
<dbReference type="ProteomicsDB" id="239141"/>
<dbReference type="EnsemblPlants" id="AT2G34500.1">
    <property type="protein sequence ID" value="AT2G34500.1"/>
    <property type="gene ID" value="AT2G34500"/>
</dbReference>
<dbReference type="GeneID" id="818013"/>
<dbReference type="Gramene" id="AT2G34500.1">
    <property type="protein sequence ID" value="AT2G34500.1"/>
    <property type="gene ID" value="AT2G34500"/>
</dbReference>
<dbReference type="KEGG" id="ath:AT2G34500"/>
<dbReference type="Araport" id="AT2G34500"/>
<dbReference type="TAIR" id="AT2G34500">
    <property type="gene designation" value="CYP710A1"/>
</dbReference>
<dbReference type="eggNOG" id="KOG0157">
    <property type="taxonomic scope" value="Eukaryota"/>
</dbReference>
<dbReference type="HOGENOM" id="CLU_023517_1_0_1"/>
<dbReference type="InParanoid" id="O64697"/>
<dbReference type="OMA" id="KCIGLEY"/>
<dbReference type="OrthoDB" id="1372046at2759"/>
<dbReference type="PhylomeDB" id="O64697"/>
<dbReference type="BioCyc" id="ARA:AT2G34500-MONOMER"/>
<dbReference type="BioCyc" id="MetaCyc:AT2G34500-MONOMER"/>
<dbReference type="BRENDA" id="1.14.19.41">
    <property type="organism ID" value="399"/>
</dbReference>
<dbReference type="UniPathway" id="UPA00766"/>
<dbReference type="PRO" id="PR:O64697"/>
<dbReference type="Proteomes" id="UP000006548">
    <property type="component" value="Chromosome 2"/>
</dbReference>
<dbReference type="ExpressionAtlas" id="O64697">
    <property type="expression patterns" value="baseline and differential"/>
</dbReference>
<dbReference type="GO" id="GO:0016020">
    <property type="term" value="C:membrane"/>
    <property type="evidence" value="ECO:0007669"/>
    <property type="project" value="UniProtKB-SubCell"/>
</dbReference>
<dbReference type="GO" id="GO:0000249">
    <property type="term" value="F:C-22 sterol desaturase (NADPH) activity"/>
    <property type="evidence" value="ECO:0000314"/>
    <property type="project" value="TAIR"/>
</dbReference>
<dbReference type="GO" id="GO:0020037">
    <property type="term" value="F:heme binding"/>
    <property type="evidence" value="ECO:0007669"/>
    <property type="project" value="InterPro"/>
</dbReference>
<dbReference type="GO" id="GO:0005506">
    <property type="term" value="F:iron ion binding"/>
    <property type="evidence" value="ECO:0007669"/>
    <property type="project" value="InterPro"/>
</dbReference>
<dbReference type="GO" id="GO:0004497">
    <property type="term" value="F:monooxygenase activity"/>
    <property type="evidence" value="ECO:0007669"/>
    <property type="project" value="UniProtKB-KW"/>
</dbReference>
<dbReference type="GO" id="GO:0016126">
    <property type="term" value="P:sterol biosynthetic process"/>
    <property type="evidence" value="ECO:0007669"/>
    <property type="project" value="UniProtKB-UniPathway"/>
</dbReference>
<dbReference type="CDD" id="cd11082">
    <property type="entry name" value="CYP61_CYP710"/>
    <property type="match status" value="1"/>
</dbReference>
<dbReference type="FunFam" id="1.10.630.10:FF:000021">
    <property type="entry name" value="Cytochrome P450 61"/>
    <property type="match status" value="1"/>
</dbReference>
<dbReference type="Gene3D" id="1.10.630.10">
    <property type="entry name" value="Cytochrome P450"/>
    <property type="match status" value="1"/>
</dbReference>
<dbReference type="InterPro" id="IPR001128">
    <property type="entry name" value="Cyt_P450"/>
</dbReference>
<dbReference type="InterPro" id="IPR017972">
    <property type="entry name" value="Cyt_P450_CS"/>
</dbReference>
<dbReference type="InterPro" id="IPR002401">
    <property type="entry name" value="Cyt_P450_E_grp-I"/>
</dbReference>
<dbReference type="InterPro" id="IPR036396">
    <property type="entry name" value="Cyt_P450_sf"/>
</dbReference>
<dbReference type="PANTHER" id="PTHR24286:SF228">
    <property type="entry name" value="C-22 STEROL DESATURASE ERG5"/>
    <property type="match status" value="1"/>
</dbReference>
<dbReference type="PANTHER" id="PTHR24286">
    <property type="entry name" value="CYTOCHROME P450 26"/>
    <property type="match status" value="1"/>
</dbReference>
<dbReference type="Pfam" id="PF00067">
    <property type="entry name" value="p450"/>
    <property type="match status" value="1"/>
</dbReference>
<dbReference type="PRINTS" id="PR00463">
    <property type="entry name" value="EP450I"/>
</dbReference>
<dbReference type="PRINTS" id="PR00385">
    <property type="entry name" value="P450"/>
</dbReference>
<dbReference type="SUPFAM" id="SSF48264">
    <property type="entry name" value="Cytochrome P450"/>
    <property type="match status" value="1"/>
</dbReference>
<dbReference type="PROSITE" id="PS00086">
    <property type="entry name" value="CYTOCHROME_P450"/>
    <property type="match status" value="1"/>
</dbReference>
<protein>
    <recommendedName>
        <fullName evidence="6">Cytochrome P450 710A1</fullName>
        <ecNumber evidence="3">1.14.19.41</ecNumber>
    </recommendedName>
    <alternativeName>
        <fullName evidence="6">C-22 sterol desaturase</fullName>
    </alternativeName>
</protein>